<keyword id="KW-0963">Cytoplasm</keyword>
<keyword id="KW-0342">GTP-binding</keyword>
<keyword id="KW-0378">Hydrolase</keyword>
<keyword id="KW-0460">Magnesium</keyword>
<keyword id="KW-0479">Metal-binding</keyword>
<keyword id="KW-0547">Nucleotide-binding</keyword>
<accession>A0AIY6</accession>
<feature type="chain" id="PRO_0000386026" description="GTPase Obg">
    <location>
        <begin position="1"/>
        <end position="429"/>
    </location>
</feature>
<feature type="domain" description="Obg" evidence="3">
    <location>
        <begin position="1"/>
        <end position="158"/>
    </location>
</feature>
<feature type="domain" description="OBG-type G" evidence="1">
    <location>
        <begin position="159"/>
        <end position="329"/>
    </location>
</feature>
<feature type="domain" description="OCT" evidence="2">
    <location>
        <begin position="351"/>
        <end position="429"/>
    </location>
</feature>
<feature type="region of interest" description="Disordered" evidence="4">
    <location>
        <begin position="124"/>
        <end position="145"/>
    </location>
</feature>
<feature type="binding site" evidence="1">
    <location>
        <begin position="165"/>
        <end position="172"/>
    </location>
    <ligand>
        <name>GTP</name>
        <dbReference type="ChEBI" id="CHEBI:37565"/>
    </ligand>
</feature>
<feature type="binding site" evidence="1">
    <location>
        <position position="172"/>
    </location>
    <ligand>
        <name>Mg(2+)</name>
        <dbReference type="ChEBI" id="CHEBI:18420"/>
    </ligand>
</feature>
<feature type="binding site" evidence="1">
    <location>
        <begin position="190"/>
        <end position="194"/>
    </location>
    <ligand>
        <name>GTP</name>
        <dbReference type="ChEBI" id="CHEBI:37565"/>
    </ligand>
</feature>
<feature type="binding site" evidence="1">
    <location>
        <position position="192"/>
    </location>
    <ligand>
        <name>Mg(2+)</name>
        <dbReference type="ChEBI" id="CHEBI:18420"/>
    </ligand>
</feature>
<feature type="binding site" evidence="1">
    <location>
        <begin position="212"/>
        <end position="215"/>
    </location>
    <ligand>
        <name>GTP</name>
        <dbReference type="ChEBI" id="CHEBI:37565"/>
    </ligand>
</feature>
<feature type="binding site" evidence="1">
    <location>
        <begin position="282"/>
        <end position="285"/>
    </location>
    <ligand>
        <name>GTP</name>
        <dbReference type="ChEBI" id="CHEBI:37565"/>
    </ligand>
</feature>
<feature type="binding site" evidence="1">
    <location>
        <begin position="310"/>
        <end position="312"/>
    </location>
    <ligand>
        <name>GTP</name>
        <dbReference type="ChEBI" id="CHEBI:37565"/>
    </ligand>
</feature>
<comment type="function">
    <text evidence="1">An essential GTPase which binds GTP, GDP and possibly (p)ppGpp with moderate affinity, with high nucleotide exchange rates and a fairly low GTP hydrolysis rate. Plays a role in control of the cell cycle, stress response, ribosome biogenesis and in those bacteria that undergo differentiation, in morphogenesis control.</text>
</comment>
<comment type="cofactor">
    <cofactor evidence="1">
        <name>Mg(2+)</name>
        <dbReference type="ChEBI" id="CHEBI:18420"/>
    </cofactor>
</comment>
<comment type="subunit">
    <text evidence="1">Monomer.</text>
</comment>
<comment type="subcellular location">
    <subcellularLocation>
        <location evidence="1">Cytoplasm</location>
    </subcellularLocation>
</comment>
<comment type="similarity">
    <text evidence="1">Belongs to the TRAFAC class OBG-HflX-like GTPase superfamily. OBG GTPase family.</text>
</comment>
<name>OBG_LISW6</name>
<proteinExistence type="inferred from homology"/>
<protein>
    <recommendedName>
        <fullName evidence="1">GTPase Obg</fullName>
        <ecNumber evidence="1">3.6.5.-</ecNumber>
    </recommendedName>
    <alternativeName>
        <fullName evidence="1">GTP-binding protein Obg</fullName>
    </alternativeName>
</protein>
<evidence type="ECO:0000255" key="1">
    <source>
        <dbReference type="HAMAP-Rule" id="MF_01454"/>
    </source>
</evidence>
<evidence type="ECO:0000255" key="2">
    <source>
        <dbReference type="PROSITE-ProRule" id="PRU01229"/>
    </source>
</evidence>
<evidence type="ECO:0000255" key="3">
    <source>
        <dbReference type="PROSITE-ProRule" id="PRU01231"/>
    </source>
</evidence>
<evidence type="ECO:0000256" key="4">
    <source>
        <dbReference type="SAM" id="MobiDB-lite"/>
    </source>
</evidence>
<gene>
    <name evidence="1" type="primary">obg</name>
    <name type="ordered locus">lwe1550</name>
</gene>
<organism>
    <name type="scientific">Listeria welshimeri serovar 6b (strain ATCC 35897 / DSM 20650 / CCUG 15529 / CIP 8149 / NCTC 11857 / SLCC 5334 / V8)</name>
    <dbReference type="NCBI Taxonomy" id="386043"/>
    <lineage>
        <taxon>Bacteria</taxon>
        <taxon>Bacillati</taxon>
        <taxon>Bacillota</taxon>
        <taxon>Bacilli</taxon>
        <taxon>Bacillales</taxon>
        <taxon>Listeriaceae</taxon>
        <taxon>Listeria</taxon>
    </lineage>
</organism>
<reference key="1">
    <citation type="journal article" date="2006" name="J. Bacteriol.">
        <title>Whole-genome sequence of Listeria welshimeri reveals common steps in genome reduction with Listeria innocua as compared to Listeria monocytogenes.</title>
        <authorList>
            <person name="Hain T."/>
            <person name="Steinweg C."/>
            <person name="Kuenne C.T."/>
            <person name="Billion A."/>
            <person name="Ghai R."/>
            <person name="Chatterjee S.S."/>
            <person name="Domann E."/>
            <person name="Kaerst U."/>
            <person name="Goesmann A."/>
            <person name="Bekel T."/>
            <person name="Bartels D."/>
            <person name="Kaiser O."/>
            <person name="Meyer F."/>
            <person name="Puehler A."/>
            <person name="Weisshaar B."/>
            <person name="Wehland J."/>
            <person name="Liang C."/>
            <person name="Dandekar T."/>
            <person name="Lampidis R."/>
            <person name="Kreft J."/>
            <person name="Goebel W."/>
            <person name="Chakraborty T."/>
        </authorList>
    </citation>
    <scope>NUCLEOTIDE SEQUENCE [LARGE SCALE GENOMIC DNA]</scope>
    <source>
        <strain>ATCC 35897 / DSM 20650 / CCUG 15529 / CIP 8149 / NCTC 11857 / SLCC 5334 / V8</strain>
    </source>
</reference>
<sequence length="429" mass="47205">MFVDQVKIYVKAGNGGDGMVAFRREKFVPNGGPAGGDGGKGADVVFVVDEGLRTLVDFRFKRIFKAEHGEHGMSKSMHGRGAEDLVVKVPQGTIVKDIDTGEIIADLVAHGQRAVIAKAGRGGRGNKRFATPANPAPELSENGEPGQERNVQLELKVLADVGLVGFPSVGKSTLLSVVSAARPKIAAYHFTTIVPNLGMVDAGDGRSFVMADLPGLIEGASQGVGLGHQFLRHIERTRVIVHVIDMSGSEGRVPYEDYMAINNELEQYNLRLMERPQIIVANKMDMPEAEENLKEFKTKIAEDIPVFPISAVTKTGLRELLLAIADKLETTPEFPLNEILEQEDEDTVLYKYIAEEPDFEITREPDGTFVLSGTKIERLFTMTNFERDASISRFARQLRAMGVDEALRKRGAKDGDIVRLLDYEFEFMD</sequence>
<dbReference type="EC" id="3.6.5.-" evidence="1"/>
<dbReference type="EMBL" id="AM263198">
    <property type="protein sequence ID" value="CAK20968.1"/>
    <property type="molecule type" value="Genomic_DNA"/>
</dbReference>
<dbReference type="RefSeq" id="WP_011702339.1">
    <property type="nucleotide sequence ID" value="NC_008555.1"/>
</dbReference>
<dbReference type="SMR" id="A0AIY6"/>
<dbReference type="STRING" id="386043.lwe1550"/>
<dbReference type="GeneID" id="61189427"/>
<dbReference type="KEGG" id="lwe:lwe1550"/>
<dbReference type="eggNOG" id="COG0536">
    <property type="taxonomic scope" value="Bacteria"/>
</dbReference>
<dbReference type="HOGENOM" id="CLU_011747_2_1_9"/>
<dbReference type="OrthoDB" id="9807318at2"/>
<dbReference type="Proteomes" id="UP000000779">
    <property type="component" value="Chromosome"/>
</dbReference>
<dbReference type="GO" id="GO:0005737">
    <property type="term" value="C:cytoplasm"/>
    <property type="evidence" value="ECO:0007669"/>
    <property type="project" value="UniProtKB-SubCell"/>
</dbReference>
<dbReference type="GO" id="GO:0005525">
    <property type="term" value="F:GTP binding"/>
    <property type="evidence" value="ECO:0007669"/>
    <property type="project" value="UniProtKB-UniRule"/>
</dbReference>
<dbReference type="GO" id="GO:0003924">
    <property type="term" value="F:GTPase activity"/>
    <property type="evidence" value="ECO:0007669"/>
    <property type="project" value="UniProtKB-UniRule"/>
</dbReference>
<dbReference type="GO" id="GO:0000287">
    <property type="term" value="F:magnesium ion binding"/>
    <property type="evidence" value="ECO:0007669"/>
    <property type="project" value="InterPro"/>
</dbReference>
<dbReference type="GO" id="GO:0042254">
    <property type="term" value="P:ribosome biogenesis"/>
    <property type="evidence" value="ECO:0007669"/>
    <property type="project" value="UniProtKB-UniRule"/>
</dbReference>
<dbReference type="CDD" id="cd01898">
    <property type="entry name" value="Obg"/>
    <property type="match status" value="1"/>
</dbReference>
<dbReference type="FunFam" id="2.70.210.12:FF:000001">
    <property type="entry name" value="GTPase Obg"/>
    <property type="match status" value="1"/>
</dbReference>
<dbReference type="FunFam" id="3.40.50.300:FF:000515">
    <property type="entry name" value="GTPase Obg"/>
    <property type="match status" value="1"/>
</dbReference>
<dbReference type="Gene3D" id="3.30.300.350">
    <property type="entry name" value="GTP-binding protein OBG, C-terminal domain"/>
    <property type="match status" value="1"/>
</dbReference>
<dbReference type="Gene3D" id="2.70.210.12">
    <property type="entry name" value="GTP1/OBG domain"/>
    <property type="match status" value="1"/>
</dbReference>
<dbReference type="Gene3D" id="3.40.50.300">
    <property type="entry name" value="P-loop containing nucleotide triphosphate hydrolases"/>
    <property type="match status" value="1"/>
</dbReference>
<dbReference type="HAMAP" id="MF_01454">
    <property type="entry name" value="GTPase_Obg"/>
    <property type="match status" value="1"/>
</dbReference>
<dbReference type="InterPro" id="IPR031167">
    <property type="entry name" value="G_OBG"/>
</dbReference>
<dbReference type="InterPro" id="IPR006073">
    <property type="entry name" value="GTP-bd"/>
</dbReference>
<dbReference type="InterPro" id="IPR014100">
    <property type="entry name" value="GTP-bd_Obg/CgtA"/>
</dbReference>
<dbReference type="InterPro" id="IPR036346">
    <property type="entry name" value="GTP-bd_prot_GTP1/OBG_C_sf"/>
</dbReference>
<dbReference type="InterPro" id="IPR006074">
    <property type="entry name" value="GTP1-OBG_CS"/>
</dbReference>
<dbReference type="InterPro" id="IPR006169">
    <property type="entry name" value="GTP1_OBG_dom"/>
</dbReference>
<dbReference type="InterPro" id="IPR036726">
    <property type="entry name" value="GTP1_OBG_dom_sf"/>
</dbReference>
<dbReference type="InterPro" id="IPR045086">
    <property type="entry name" value="OBG_GTPase"/>
</dbReference>
<dbReference type="InterPro" id="IPR015349">
    <property type="entry name" value="OCT_dom"/>
</dbReference>
<dbReference type="InterPro" id="IPR027417">
    <property type="entry name" value="P-loop_NTPase"/>
</dbReference>
<dbReference type="NCBIfam" id="TIGR02729">
    <property type="entry name" value="Obg_CgtA"/>
    <property type="match status" value="1"/>
</dbReference>
<dbReference type="NCBIfam" id="TIGR03595">
    <property type="entry name" value="Obg_CgtA_exten"/>
    <property type="match status" value="1"/>
</dbReference>
<dbReference type="NCBIfam" id="NF008954">
    <property type="entry name" value="PRK12296.1"/>
    <property type="match status" value="1"/>
</dbReference>
<dbReference type="NCBIfam" id="NF008955">
    <property type="entry name" value="PRK12297.1"/>
    <property type="match status" value="1"/>
</dbReference>
<dbReference type="NCBIfam" id="NF008956">
    <property type="entry name" value="PRK12299.1"/>
    <property type="match status" value="1"/>
</dbReference>
<dbReference type="PANTHER" id="PTHR11702">
    <property type="entry name" value="DEVELOPMENTALLY REGULATED GTP-BINDING PROTEIN-RELATED"/>
    <property type="match status" value="1"/>
</dbReference>
<dbReference type="PANTHER" id="PTHR11702:SF31">
    <property type="entry name" value="MITOCHONDRIAL RIBOSOME-ASSOCIATED GTPASE 2"/>
    <property type="match status" value="1"/>
</dbReference>
<dbReference type="Pfam" id="PF09269">
    <property type="entry name" value="DUF1967"/>
    <property type="match status" value="1"/>
</dbReference>
<dbReference type="Pfam" id="PF01018">
    <property type="entry name" value="GTP1_OBG"/>
    <property type="match status" value="1"/>
</dbReference>
<dbReference type="Pfam" id="PF01926">
    <property type="entry name" value="MMR_HSR1"/>
    <property type="match status" value="1"/>
</dbReference>
<dbReference type="PIRSF" id="PIRSF002401">
    <property type="entry name" value="GTP_bd_Obg/CgtA"/>
    <property type="match status" value="1"/>
</dbReference>
<dbReference type="PRINTS" id="PR00326">
    <property type="entry name" value="GTP1OBG"/>
</dbReference>
<dbReference type="SUPFAM" id="SSF102741">
    <property type="entry name" value="Obg GTP-binding protein C-terminal domain"/>
    <property type="match status" value="1"/>
</dbReference>
<dbReference type="SUPFAM" id="SSF82051">
    <property type="entry name" value="Obg GTP-binding protein N-terminal domain"/>
    <property type="match status" value="1"/>
</dbReference>
<dbReference type="SUPFAM" id="SSF52540">
    <property type="entry name" value="P-loop containing nucleoside triphosphate hydrolases"/>
    <property type="match status" value="1"/>
</dbReference>
<dbReference type="PROSITE" id="PS51710">
    <property type="entry name" value="G_OBG"/>
    <property type="match status" value="1"/>
</dbReference>
<dbReference type="PROSITE" id="PS00905">
    <property type="entry name" value="GTP1_OBG"/>
    <property type="match status" value="1"/>
</dbReference>
<dbReference type="PROSITE" id="PS51883">
    <property type="entry name" value="OBG"/>
    <property type="match status" value="1"/>
</dbReference>
<dbReference type="PROSITE" id="PS51881">
    <property type="entry name" value="OCT"/>
    <property type="match status" value="1"/>
</dbReference>